<sequence>MTTNPKPVYQRILLKLSGEALQGEEGFGIDPATLDRMAQEVKELIELGVQVGVVIGGGNLFRGAGLAEAGMNRVVGDHMGMLATVMNGLAMRDALHRAYVNARVMSAIPLKGVCDDYNWADAIAQLRQGRVVIFSAGTGNPFFTTDSAACLRGIEIEADVVLKATKVDGVFTADPVSNPDAELYDKLSYSSVLEKELKVMDLAAFTLARDHNMPIRVFNMNKPGALRRVVMGETEGTLISNAE</sequence>
<organism>
    <name type="scientific">Aliivibrio fischeri (strain ATCC 700601 / ES114)</name>
    <name type="common">Vibrio fischeri</name>
    <dbReference type="NCBI Taxonomy" id="312309"/>
    <lineage>
        <taxon>Bacteria</taxon>
        <taxon>Pseudomonadati</taxon>
        <taxon>Pseudomonadota</taxon>
        <taxon>Gammaproteobacteria</taxon>
        <taxon>Vibrionales</taxon>
        <taxon>Vibrionaceae</taxon>
        <taxon>Aliivibrio</taxon>
    </lineage>
</organism>
<accession>Q5E3E1</accession>
<feature type="chain" id="PRO_1000054050" description="Uridylate kinase">
    <location>
        <begin position="1"/>
        <end position="243"/>
    </location>
</feature>
<feature type="region of interest" description="Involved in allosteric activation by GTP" evidence="1">
    <location>
        <begin position="23"/>
        <end position="28"/>
    </location>
</feature>
<feature type="binding site" evidence="1">
    <location>
        <begin position="15"/>
        <end position="18"/>
    </location>
    <ligand>
        <name>ATP</name>
        <dbReference type="ChEBI" id="CHEBI:30616"/>
    </ligand>
</feature>
<feature type="binding site" evidence="1">
    <location>
        <position position="57"/>
    </location>
    <ligand>
        <name>UMP</name>
        <dbReference type="ChEBI" id="CHEBI:57865"/>
    </ligand>
</feature>
<feature type="binding site" evidence="1">
    <location>
        <position position="58"/>
    </location>
    <ligand>
        <name>ATP</name>
        <dbReference type="ChEBI" id="CHEBI:30616"/>
    </ligand>
</feature>
<feature type="binding site" evidence="1">
    <location>
        <position position="62"/>
    </location>
    <ligand>
        <name>ATP</name>
        <dbReference type="ChEBI" id="CHEBI:30616"/>
    </ligand>
</feature>
<feature type="binding site" evidence="1">
    <location>
        <position position="77"/>
    </location>
    <ligand>
        <name>UMP</name>
        <dbReference type="ChEBI" id="CHEBI:57865"/>
    </ligand>
</feature>
<feature type="binding site" evidence="1">
    <location>
        <begin position="138"/>
        <end position="145"/>
    </location>
    <ligand>
        <name>UMP</name>
        <dbReference type="ChEBI" id="CHEBI:57865"/>
    </ligand>
</feature>
<feature type="binding site" evidence="1">
    <location>
        <position position="165"/>
    </location>
    <ligand>
        <name>ATP</name>
        <dbReference type="ChEBI" id="CHEBI:30616"/>
    </ligand>
</feature>
<feature type="binding site" evidence="1">
    <location>
        <position position="171"/>
    </location>
    <ligand>
        <name>ATP</name>
        <dbReference type="ChEBI" id="CHEBI:30616"/>
    </ligand>
</feature>
<feature type="binding site" evidence="1">
    <location>
        <position position="174"/>
    </location>
    <ligand>
        <name>ATP</name>
        <dbReference type="ChEBI" id="CHEBI:30616"/>
    </ligand>
</feature>
<proteinExistence type="inferred from homology"/>
<evidence type="ECO:0000255" key="1">
    <source>
        <dbReference type="HAMAP-Rule" id="MF_01220"/>
    </source>
</evidence>
<gene>
    <name evidence="1" type="primary">pyrH</name>
    <name type="ordered locus">VF_1960</name>
</gene>
<dbReference type="EC" id="2.7.4.22" evidence="1"/>
<dbReference type="EMBL" id="CP000020">
    <property type="protein sequence ID" value="AAW86455.1"/>
    <property type="molecule type" value="Genomic_DNA"/>
</dbReference>
<dbReference type="RefSeq" id="WP_011262433.1">
    <property type="nucleotide sequence ID" value="NC_006840.2"/>
</dbReference>
<dbReference type="RefSeq" id="YP_205343.1">
    <property type="nucleotide sequence ID" value="NC_006840.2"/>
</dbReference>
<dbReference type="SMR" id="Q5E3E1"/>
<dbReference type="STRING" id="312309.VF_1960"/>
<dbReference type="EnsemblBacteria" id="AAW86455">
    <property type="protein sequence ID" value="AAW86455"/>
    <property type="gene ID" value="VF_1960"/>
</dbReference>
<dbReference type="GeneID" id="54164656"/>
<dbReference type="KEGG" id="vfi:VF_1960"/>
<dbReference type="PATRIC" id="fig|312309.11.peg.1987"/>
<dbReference type="eggNOG" id="COG0528">
    <property type="taxonomic scope" value="Bacteria"/>
</dbReference>
<dbReference type="HOGENOM" id="CLU_033861_0_0_6"/>
<dbReference type="OrthoDB" id="9807458at2"/>
<dbReference type="UniPathway" id="UPA00159">
    <property type="reaction ID" value="UER00275"/>
</dbReference>
<dbReference type="Proteomes" id="UP000000537">
    <property type="component" value="Chromosome I"/>
</dbReference>
<dbReference type="GO" id="GO:0005829">
    <property type="term" value="C:cytosol"/>
    <property type="evidence" value="ECO:0007669"/>
    <property type="project" value="TreeGrafter"/>
</dbReference>
<dbReference type="GO" id="GO:0005524">
    <property type="term" value="F:ATP binding"/>
    <property type="evidence" value="ECO:0007669"/>
    <property type="project" value="UniProtKB-KW"/>
</dbReference>
<dbReference type="GO" id="GO:0033862">
    <property type="term" value="F:UMP kinase activity"/>
    <property type="evidence" value="ECO:0007669"/>
    <property type="project" value="UniProtKB-EC"/>
</dbReference>
<dbReference type="GO" id="GO:0044210">
    <property type="term" value="P:'de novo' CTP biosynthetic process"/>
    <property type="evidence" value="ECO:0007669"/>
    <property type="project" value="UniProtKB-UniRule"/>
</dbReference>
<dbReference type="GO" id="GO:0006225">
    <property type="term" value="P:UDP biosynthetic process"/>
    <property type="evidence" value="ECO:0007669"/>
    <property type="project" value="TreeGrafter"/>
</dbReference>
<dbReference type="CDD" id="cd04254">
    <property type="entry name" value="AAK_UMPK-PyrH-Ec"/>
    <property type="match status" value="1"/>
</dbReference>
<dbReference type="FunFam" id="3.40.1160.10:FF:000001">
    <property type="entry name" value="Uridylate kinase"/>
    <property type="match status" value="1"/>
</dbReference>
<dbReference type="Gene3D" id="3.40.1160.10">
    <property type="entry name" value="Acetylglutamate kinase-like"/>
    <property type="match status" value="1"/>
</dbReference>
<dbReference type="HAMAP" id="MF_01220_B">
    <property type="entry name" value="PyrH_B"/>
    <property type="match status" value="1"/>
</dbReference>
<dbReference type="InterPro" id="IPR036393">
    <property type="entry name" value="AceGlu_kinase-like_sf"/>
</dbReference>
<dbReference type="InterPro" id="IPR001048">
    <property type="entry name" value="Asp/Glu/Uridylate_kinase"/>
</dbReference>
<dbReference type="InterPro" id="IPR011817">
    <property type="entry name" value="Uridylate_kinase"/>
</dbReference>
<dbReference type="InterPro" id="IPR015963">
    <property type="entry name" value="Uridylate_kinase_bac"/>
</dbReference>
<dbReference type="NCBIfam" id="TIGR02075">
    <property type="entry name" value="pyrH_bact"/>
    <property type="match status" value="1"/>
</dbReference>
<dbReference type="PANTHER" id="PTHR42833">
    <property type="entry name" value="URIDYLATE KINASE"/>
    <property type="match status" value="1"/>
</dbReference>
<dbReference type="PANTHER" id="PTHR42833:SF4">
    <property type="entry name" value="URIDYLATE KINASE PUMPKIN, CHLOROPLASTIC"/>
    <property type="match status" value="1"/>
</dbReference>
<dbReference type="Pfam" id="PF00696">
    <property type="entry name" value="AA_kinase"/>
    <property type="match status" value="1"/>
</dbReference>
<dbReference type="PIRSF" id="PIRSF005650">
    <property type="entry name" value="Uridylate_kin"/>
    <property type="match status" value="1"/>
</dbReference>
<dbReference type="SUPFAM" id="SSF53633">
    <property type="entry name" value="Carbamate kinase-like"/>
    <property type="match status" value="1"/>
</dbReference>
<comment type="function">
    <text evidence="1">Catalyzes the reversible phosphorylation of UMP to UDP.</text>
</comment>
<comment type="catalytic activity">
    <reaction evidence="1">
        <text>UMP + ATP = UDP + ADP</text>
        <dbReference type="Rhea" id="RHEA:24400"/>
        <dbReference type="ChEBI" id="CHEBI:30616"/>
        <dbReference type="ChEBI" id="CHEBI:57865"/>
        <dbReference type="ChEBI" id="CHEBI:58223"/>
        <dbReference type="ChEBI" id="CHEBI:456216"/>
        <dbReference type="EC" id="2.7.4.22"/>
    </reaction>
</comment>
<comment type="activity regulation">
    <text evidence="1">Allosterically activated by GTP. Inhibited by UTP.</text>
</comment>
<comment type="pathway">
    <text evidence="1">Pyrimidine metabolism; CTP biosynthesis via de novo pathway; UDP from UMP (UMPK route): step 1/1.</text>
</comment>
<comment type="subunit">
    <text evidence="1">Homohexamer.</text>
</comment>
<comment type="subcellular location">
    <subcellularLocation>
        <location evidence="1">Cytoplasm</location>
    </subcellularLocation>
</comment>
<comment type="similarity">
    <text evidence="1">Belongs to the UMP kinase family.</text>
</comment>
<reference key="1">
    <citation type="journal article" date="2005" name="Proc. Natl. Acad. Sci. U.S.A.">
        <title>Complete genome sequence of Vibrio fischeri: a symbiotic bacterium with pathogenic congeners.</title>
        <authorList>
            <person name="Ruby E.G."/>
            <person name="Urbanowski M."/>
            <person name="Campbell J."/>
            <person name="Dunn A."/>
            <person name="Faini M."/>
            <person name="Gunsalus R."/>
            <person name="Lostroh P."/>
            <person name="Lupp C."/>
            <person name="McCann J."/>
            <person name="Millikan D."/>
            <person name="Schaefer A."/>
            <person name="Stabb E."/>
            <person name="Stevens A."/>
            <person name="Visick K."/>
            <person name="Whistler C."/>
            <person name="Greenberg E.P."/>
        </authorList>
    </citation>
    <scope>NUCLEOTIDE SEQUENCE [LARGE SCALE GENOMIC DNA]</scope>
    <source>
        <strain>ATCC 700601 / ES114</strain>
    </source>
</reference>
<protein>
    <recommendedName>
        <fullName evidence="1">Uridylate kinase</fullName>
        <shortName evidence="1">UK</shortName>
        <ecNumber evidence="1">2.7.4.22</ecNumber>
    </recommendedName>
    <alternativeName>
        <fullName evidence="1">Uridine monophosphate kinase</fullName>
        <shortName evidence="1">UMP kinase</shortName>
        <shortName evidence="1">UMPK</shortName>
    </alternativeName>
</protein>
<keyword id="KW-0021">Allosteric enzyme</keyword>
<keyword id="KW-0067">ATP-binding</keyword>
<keyword id="KW-0963">Cytoplasm</keyword>
<keyword id="KW-0418">Kinase</keyword>
<keyword id="KW-0547">Nucleotide-binding</keyword>
<keyword id="KW-0665">Pyrimidine biosynthesis</keyword>
<keyword id="KW-1185">Reference proteome</keyword>
<keyword id="KW-0808">Transferase</keyword>
<name>PYRH_ALIF1</name>